<sequence>WASQVSENRPVCKAIIQGKQFEGLVDTGADVSIIALNQWPKNWPKQKAVTGLVGIGTASEVYQSTEILHCLGPDNQESTVQPMITSIPLNLWGRDLLQQWGAEITMPAPLYSPTSQKIMTKMGYIPGKGLGKNEDGIKVPVEAKINQEREGIGYPF</sequence>
<protein>
    <recommendedName>
        <fullName>Endogenous retrovirus group K member 7 Pro protein</fullName>
    </recommendedName>
    <alternativeName>
        <fullName>HERV-K(III) Pro protein</fullName>
    </alternativeName>
    <alternativeName>
        <fullName>HERV-K102 Pro protein</fullName>
    </alternativeName>
    <alternativeName>
        <fullName>HERV-K_1q22 provirus ancestral Pro protein</fullName>
        <ecNumber>3.4.23.50</ecNumber>
    </alternativeName>
    <alternativeName>
        <fullName>Protease</fullName>
    </alternativeName>
    <alternativeName>
        <fullName>Proteinase</fullName>
        <shortName>PR</shortName>
    </alternativeName>
</protein>
<organism>
    <name type="scientific">Homo sapiens</name>
    <name type="common">Human</name>
    <dbReference type="NCBI Taxonomy" id="9606"/>
    <lineage>
        <taxon>Eukaryota</taxon>
        <taxon>Metazoa</taxon>
        <taxon>Chordata</taxon>
        <taxon>Craniata</taxon>
        <taxon>Vertebrata</taxon>
        <taxon>Euteleostomi</taxon>
        <taxon>Mammalia</taxon>
        <taxon>Eutheria</taxon>
        <taxon>Euarchontoglires</taxon>
        <taxon>Primates</taxon>
        <taxon>Haplorrhini</taxon>
        <taxon>Catarrhini</taxon>
        <taxon>Hominidae</taxon>
        <taxon>Homo</taxon>
    </lineage>
</organism>
<feature type="chain" id="PRO_0000199546" description="Endogenous retrovirus group K member 7 Pro protein">
    <location>
        <begin position="1"/>
        <end position="156"/>
    </location>
</feature>
<feature type="domain" description="Peptidase A2" evidence="3">
    <location>
        <begin position="21"/>
        <end position="96"/>
    </location>
</feature>
<feature type="domain" description="G-patch" evidence="2">
    <location>
        <begin position="111"/>
        <end position="156"/>
    </location>
</feature>
<feature type="active site" evidence="4">
    <location>
        <position position="26"/>
    </location>
</feature>
<feature type="sequence conflict" description="In Ref. 1." evidence="5" ref="1">
    <original>S</original>
    <variation>T</variation>
    <location>
        <position position="6"/>
    </location>
</feature>
<comment type="function">
    <text>Retroviral proteases have roles in processing of the primary translation products and the maturation of the viral particle. Endogenous Pro proteins may have kept, lost or modified their original function during evolution. This endogenous protein has retained most of the characteristics of retroviral proteases.</text>
</comment>
<comment type="catalytic activity">
    <reaction>
        <text>Processing at the authentic HIV-1 PR recognition site and release of the mature p17 matrix and the p24 capsid protein, as a result of the cleavage of the -SQNY-|-PIVQ- cleavage site.</text>
        <dbReference type="EC" id="3.4.23.50"/>
    </reaction>
</comment>
<comment type="subunit">
    <text evidence="1">Active as a homodimer.</text>
</comment>
<comment type="alternative products">
    <event type="ribosomal frameshifting"/>
    <isoform>
        <id>P63131-1</id>
        <name>1</name>
        <sequence type="displayed"/>
    </isoform>
    <text>This protein is synthesized as Gag-Pro and Gag-Pro-Pol polyprotein. These polyproteins are thought, by similarity with type-B retroviruses, to be generated by -1 frameshifts occurring at the Gag-Pro and Pro-Pol genes boundaries.</text>
</comment>
<comment type="PTM">
    <text evidence="1">Autoproteolytically processed at the N-terminus. Expected C-terminal autoprocessing not detected. The sequence shown is that of the processed Pro protein (By similarity).</text>
</comment>
<comment type="similarity">
    <text evidence="5">Belongs to the peptidase A2 family. HERV class-II K(HML-2) subfamily.</text>
</comment>
<dbReference type="EC" id="3.4.23.50"/>
<dbReference type="EMBL" id="AF164610">
    <property type="status" value="NOT_ANNOTATED_CDS"/>
    <property type="molecule type" value="Genomic_DNA"/>
</dbReference>
<dbReference type="EMBL" id="AL353807">
    <property type="status" value="NOT_ANNOTATED_CDS"/>
    <property type="molecule type" value="Genomic_DNA"/>
</dbReference>
<dbReference type="SMR" id="P63131"/>
<dbReference type="iPTMnet" id="P63131"/>
<dbReference type="PhosphoSitePlus" id="P63131"/>
<dbReference type="BioMuta" id="HGNC:31828"/>
<dbReference type="DMDM" id="52000859"/>
<dbReference type="AGR" id="HGNC:31828"/>
<dbReference type="GeneCards" id="ERVK-7"/>
<dbReference type="HGNC" id="HGNC:31828">
    <property type="gene designation" value="ERVK-7"/>
</dbReference>
<dbReference type="MIM" id="614013">
    <property type="type" value="gene"/>
</dbReference>
<dbReference type="neXtProt" id="NX_P63131"/>
<dbReference type="PhylomeDB" id="P63131"/>
<dbReference type="Pharos" id="P63131">
    <property type="development level" value="Tdark"/>
</dbReference>
<dbReference type="Proteomes" id="UP000005640">
    <property type="component" value="Unplaced"/>
</dbReference>
<dbReference type="GO" id="GO:0004190">
    <property type="term" value="F:aspartic-type endopeptidase activity"/>
    <property type="evidence" value="ECO:0007669"/>
    <property type="project" value="UniProtKB-KW"/>
</dbReference>
<dbReference type="GO" id="GO:0003676">
    <property type="term" value="F:nucleic acid binding"/>
    <property type="evidence" value="ECO:0007669"/>
    <property type="project" value="InterPro"/>
</dbReference>
<dbReference type="GO" id="GO:0006508">
    <property type="term" value="P:proteolysis"/>
    <property type="evidence" value="ECO:0007669"/>
    <property type="project" value="UniProtKB-KW"/>
</dbReference>
<dbReference type="GO" id="GO:0075523">
    <property type="term" value="P:viral translational frameshifting"/>
    <property type="evidence" value="ECO:0007669"/>
    <property type="project" value="UniProtKB-KW"/>
</dbReference>
<dbReference type="CDD" id="cd05482">
    <property type="entry name" value="HIV_retropepsin_like"/>
    <property type="match status" value="1"/>
</dbReference>
<dbReference type="Gene3D" id="2.40.70.10">
    <property type="entry name" value="Acid Proteases"/>
    <property type="match status" value="1"/>
</dbReference>
<dbReference type="InterPro" id="IPR001969">
    <property type="entry name" value="Aspartic_peptidase_AS"/>
</dbReference>
<dbReference type="InterPro" id="IPR000467">
    <property type="entry name" value="G_patch_dom"/>
</dbReference>
<dbReference type="InterPro" id="IPR051592">
    <property type="entry name" value="HERV-K_Pro_peptidase_A2"/>
</dbReference>
<dbReference type="InterPro" id="IPR001995">
    <property type="entry name" value="Peptidase_A2_cat"/>
</dbReference>
<dbReference type="InterPro" id="IPR021109">
    <property type="entry name" value="Peptidase_aspartic_dom_sf"/>
</dbReference>
<dbReference type="InterPro" id="IPR034170">
    <property type="entry name" value="Retropepsin-like_cat_dom"/>
</dbReference>
<dbReference type="InterPro" id="IPR018061">
    <property type="entry name" value="Retropepsins"/>
</dbReference>
<dbReference type="PANTHER" id="PTHR19422">
    <property type="entry name" value="GAG RETROVIRAL POLYPROTEIN"/>
    <property type="match status" value="1"/>
</dbReference>
<dbReference type="PANTHER" id="PTHR19422:SF123">
    <property type="entry name" value="RT1 CLASS I, LOCUS CE15"/>
    <property type="match status" value="1"/>
</dbReference>
<dbReference type="Pfam" id="PF01585">
    <property type="entry name" value="G-patch"/>
    <property type="match status" value="1"/>
</dbReference>
<dbReference type="Pfam" id="PF00077">
    <property type="entry name" value="RVP"/>
    <property type="match status" value="1"/>
</dbReference>
<dbReference type="SMART" id="SM00443">
    <property type="entry name" value="G_patch"/>
    <property type="match status" value="1"/>
</dbReference>
<dbReference type="SUPFAM" id="SSF50630">
    <property type="entry name" value="Acid proteases"/>
    <property type="match status" value="1"/>
</dbReference>
<dbReference type="PROSITE" id="PS50175">
    <property type="entry name" value="ASP_PROT_RETROV"/>
    <property type="match status" value="1"/>
</dbReference>
<dbReference type="PROSITE" id="PS00141">
    <property type="entry name" value="ASP_PROTEASE"/>
    <property type="match status" value="1"/>
</dbReference>
<dbReference type="PROSITE" id="PS50174">
    <property type="entry name" value="G_PATCH"/>
    <property type="match status" value="1"/>
</dbReference>
<gene>
    <name type="primary">ERVK-7</name>
</gene>
<keyword id="KW-0064">Aspartyl protease</keyword>
<keyword id="KW-0068">Autocatalytic cleavage</keyword>
<keyword id="KW-0895">ERV</keyword>
<keyword id="KW-0378">Hydrolase</keyword>
<keyword id="KW-0645">Protease</keyword>
<keyword id="KW-1185">Reference proteome</keyword>
<keyword id="KW-0688">Ribosomal frameshifting</keyword>
<keyword id="KW-0814">Transposable element</keyword>
<accession>P63131</accession>
<accession>Q9UKI0</accession>
<proteinExistence type="inferred from homology"/>
<evidence type="ECO:0000250" key="1"/>
<evidence type="ECO:0000255" key="2">
    <source>
        <dbReference type="PROSITE-ProRule" id="PRU00092"/>
    </source>
</evidence>
<evidence type="ECO:0000255" key="3">
    <source>
        <dbReference type="PROSITE-ProRule" id="PRU00275"/>
    </source>
</evidence>
<evidence type="ECO:0000255" key="4">
    <source>
        <dbReference type="PROSITE-ProRule" id="PRU10094"/>
    </source>
</evidence>
<evidence type="ECO:0000305" key="5"/>
<reference key="1">
    <citation type="journal article" date="1999" name="Curr. Biol.">
        <title>Many human endogenous retrovirus K (HERV-K) proviruses are unique to humans.</title>
        <authorList>
            <person name="Barbulescu M."/>
            <person name="Turner G."/>
            <person name="Seaman M.I."/>
            <person name="Deinard A.S."/>
            <person name="Kidd K.K."/>
            <person name="Lenz J."/>
        </authorList>
    </citation>
    <scope>NUCLEOTIDE SEQUENCE [GENOMIC DNA]</scope>
</reference>
<reference key="2">
    <citation type="journal article" date="2006" name="Nature">
        <title>The DNA sequence and biological annotation of human chromosome 1.</title>
        <authorList>
            <person name="Gregory S.G."/>
            <person name="Barlow K.F."/>
            <person name="McLay K.E."/>
            <person name="Kaul R."/>
            <person name="Swarbreck D."/>
            <person name="Dunham A."/>
            <person name="Scott C.E."/>
            <person name="Howe K.L."/>
            <person name="Woodfine K."/>
            <person name="Spencer C.C.A."/>
            <person name="Jones M.C."/>
            <person name="Gillson C."/>
            <person name="Searle S."/>
            <person name="Zhou Y."/>
            <person name="Kokocinski F."/>
            <person name="McDonald L."/>
            <person name="Evans R."/>
            <person name="Phillips K."/>
            <person name="Atkinson A."/>
            <person name="Cooper R."/>
            <person name="Jones C."/>
            <person name="Hall R.E."/>
            <person name="Andrews T.D."/>
            <person name="Lloyd C."/>
            <person name="Ainscough R."/>
            <person name="Almeida J.P."/>
            <person name="Ambrose K.D."/>
            <person name="Anderson F."/>
            <person name="Andrew R.W."/>
            <person name="Ashwell R.I.S."/>
            <person name="Aubin K."/>
            <person name="Babbage A.K."/>
            <person name="Bagguley C.L."/>
            <person name="Bailey J."/>
            <person name="Beasley H."/>
            <person name="Bethel G."/>
            <person name="Bird C.P."/>
            <person name="Bray-Allen S."/>
            <person name="Brown J.Y."/>
            <person name="Brown A.J."/>
            <person name="Buckley D."/>
            <person name="Burton J."/>
            <person name="Bye J."/>
            <person name="Carder C."/>
            <person name="Chapman J.C."/>
            <person name="Clark S.Y."/>
            <person name="Clarke G."/>
            <person name="Clee C."/>
            <person name="Cobley V."/>
            <person name="Collier R.E."/>
            <person name="Corby N."/>
            <person name="Coville G.J."/>
            <person name="Davies J."/>
            <person name="Deadman R."/>
            <person name="Dunn M."/>
            <person name="Earthrowl M."/>
            <person name="Ellington A.G."/>
            <person name="Errington H."/>
            <person name="Frankish A."/>
            <person name="Frankland J."/>
            <person name="French L."/>
            <person name="Garner P."/>
            <person name="Garnett J."/>
            <person name="Gay L."/>
            <person name="Ghori M.R.J."/>
            <person name="Gibson R."/>
            <person name="Gilby L.M."/>
            <person name="Gillett W."/>
            <person name="Glithero R.J."/>
            <person name="Grafham D.V."/>
            <person name="Griffiths C."/>
            <person name="Griffiths-Jones S."/>
            <person name="Grocock R."/>
            <person name="Hammond S."/>
            <person name="Harrison E.S.I."/>
            <person name="Hart E."/>
            <person name="Haugen E."/>
            <person name="Heath P.D."/>
            <person name="Holmes S."/>
            <person name="Holt K."/>
            <person name="Howden P.J."/>
            <person name="Hunt A.R."/>
            <person name="Hunt S.E."/>
            <person name="Hunter G."/>
            <person name="Isherwood J."/>
            <person name="James R."/>
            <person name="Johnson C."/>
            <person name="Johnson D."/>
            <person name="Joy A."/>
            <person name="Kay M."/>
            <person name="Kershaw J.K."/>
            <person name="Kibukawa M."/>
            <person name="Kimberley A.M."/>
            <person name="King A."/>
            <person name="Knights A.J."/>
            <person name="Lad H."/>
            <person name="Laird G."/>
            <person name="Lawlor S."/>
            <person name="Leongamornlert D.A."/>
            <person name="Lloyd D.M."/>
            <person name="Loveland J."/>
            <person name="Lovell J."/>
            <person name="Lush M.J."/>
            <person name="Lyne R."/>
            <person name="Martin S."/>
            <person name="Mashreghi-Mohammadi M."/>
            <person name="Matthews L."/>
            <person name="Matthews N.S.W."/>
            <person name="McLaren S."/>
            <person name="Milne S."/>
            <person name="Mistry S."/>
            <person name="Moore M.J.F."/>
            <person name="Nickerson T."/>
            <person name="O'Dell C.N."/>
            <person name="Oliver K."/>
            <person name="Palmeiri A."/>
            <person name="Palmer S.A."/>
            <person name="Parker A."/>
            <person name="Patel D."/>
            <person name="Pearce A.V."/>
            <person name="Peck A.I."/>
            <person name="Pelan S."/>
            <person name="Phelps K."/>
            <person name="Phillimore B.J."/>
            <person name="Plumb R."/>
            <person name="Rajan J."/>
            <person name="Raymond C."/>
            <person name="Rouse G."/>
            <person name="Saenphimmachak C."/>
            <person name="Sehra H.K."/>
            <person name="Sheridan E."/>
            <person name="Shownkeen R."/>
            <person name="Sims S."/>
            <person name="Skuce C.D."/>
            <person name="Smith M."/>
            <person name="Steward C."/>
            <person name="Subramanian S."/>
            <person name="Sycamore N."/>
            <person name="Tracey A."/>
            <person name="Tromans A."/>
            <person name="Van Helmond Z."/>
            <person name="Wall M."/>
            <person name="Wallis J.M."/>
            <person name="White S."/>
            <person name="Whitehead S.L."/>
            <person name="Wilkinson J.E."/>
            <person name="Willey D.L."/>
            <person name="Williams H."/>
            <person name="Wilming L."/>
            <person name="Wray P.W."/>
            <person name="Wu Z."/>
            <person name="Coulson A."/>
            <person name="Vaudin M."/>
            <person name="Sulston J.E."/>
            <person name="Durbin R.M."/>
            <person name="Hubbard T."/>
            <person name="Wooster R."/>
            <person name="Dunham I."/>
            <person name="Carter N.P."/>
            <person name="McVean G."/>
            <person name="Ross M.T."/>
            <person name="Harrow J."/>
            <person name="Olson M.V."/>
            <person name="Beck S."/>
            <person name="Rogers J."/>
            <person name="Bentley D.R."/>
        </authorList>
    </citation>
    <scope>NUCLEOTIDE SEQUENCE [LARGE SCALE GENOMIC DNA]</scope>
</reference>
<name>VPK7_HUMAN</name>